<accession>Q6D6A7</accession>
<gene>
    <name evidence="1" type="primary">mdoH</name>
    <name evidence="1" type="synonym">opgH</name>
    <name type="ordered locus">ECA1778</name>
</gene>
<sequence length="854" mass="97299">MNKSTSSLDYIEKLPLPAEQAEVLREKLPQAAWNDQAVLHQALSEGSQPEGNQVNVQAEDDVALHSVQARLEMAWADGLDNGKQLGTDREGRAALKAMPVITRASMFPDVWRTNPLIRWWESLLGRTVPPRPHYSPEEKISENRWRLVGTIRRYILLALTLFQTAIATWYMKTILPYQGWALIDPFEMAGQPWTRSLMQLLPYVLQSGILVLFAVLFCWVSAGFWTALMGFLQLLIGRDKYSISSTTVGDEALNPEHRTALIMPICNEDVERVFAGLRATYESVEATGNLEHFDIYVLSDSNDPDICVAEQKAWMELCRDVGGAGRIFYRRRRRRVKRKSGNIDDFCRRWGNQYSYMVILDADSVMSGECLTSLVRLMEANPNAGIIQSSPKASGMDTLYARCQQFATRVYGPLFTAGLHFWQLGESHYWGHNAIIRVKPFIEHCALAPLPGEGSFAGAILSHDFVEAALMRRAGWGVWIAYDLPGSYEELPPNLLDELKRDRRWCHGNLMNFRLFLVKGMHPVHRAVFLTGVMSYLSAPLWFMFLVLSTALQVVHTLMEPQYFLQPRQLFPVWPQWRPELAIALFSTTLVLLFLPKLLSVILVWAKGAKEYGGAFRVFLSLLLEMLFSVLLAPVRMLFHTVFVVSAFLGWSVQWNSPQRDDDATPWSEAFVRHGSQLILGLVWAIGMAWLDLRFLWWLSPIVFSLILSPVVSVYSSRAALGLGCKRAKLLLIPEEFNPPRELVATDEYCRLNHQRRLDDGFMQAVFDPSVNALASAMATARHRFSRAIEDVREQNVREALNRKPEEVSNNQRLALLSDPVTISRMHYHVWQKPEAYAAWVEFYQKLPAPHIKS</sequence>
<name>OPGH_PECAS</name>
<comment type="function">
    <text evidence="1">Involved in the biosynthesis of osmoregulated periplasmic glucans (OPGs).</text>
</comment>
<comment type="pathway">
    <text evidence="1">Glycan metabolism; osmoregulated periplasmic glucan (OPG) biosynthesis.</text>
</comment>
<comment type="subcellular location">
    <subcellularLocation>
        <location evidence="1">Cell inner membrane</location>
        <topology evidence="1">Multi-pass membrane protein</topology>
    </subcellularLocation>
</comment>
<comment type="similarity">
    <text evidence="1">Belongs to the glycosyltransferase 2 family. OpgH subfamily.</text>
</comment>
<reference key="1">
    <citation type="journal article" date="2004" name="Proc. Natl. Acad. Sci. U.S.A.">
        <title>Genome sequence of the enterobacterial phytopathogen Erwinia carotovora subsp. atroseptica and characterization of virulence factors.</title>
        <authorList>
            <person name="Bell K.S."/>
            <person name="Sebaihia M."/>
            <person name="Pritchard L."/>
            <person name="Holden M.T.G."/>
            <person name="Hyman L.J."/>
            <person name="Holeva M.C."/>
            <person name="Thomson N.R."/>
            <person name="Bentley S.D."/>
            <person name="Churcher L.J.C."/>
            <person name="Mungall K."/>
            <person name="Atkin R."/>
            <person name="Bason N."/>
            <person name="Brooks K."/>
            <person name="Chillingworth T."/>
            <person name="Clark K."/>
            <person name="Doggett J."/>
            <person name="Fraser A."/>
            <person name="Hance Z."/>
            <person name="Hauser H."/>
            <person name="Jagels K."/>
            <person name="Moule S."/>
            <person name="Norbertczak H."/>
            <person name="Ormond D."/>
            <person name="Price C."/>
            <person name="Quail M.A."/>
            <person name="Sanders M."/>
            <person name="Walker D."/>
            <person name="Whitehead S."/>
            <person name="Salmond G.P.C."/>
            <person name="Birch P.R.J."/>
            <person name="Parkhill J."/>
            <person name="Toth I.K."/>
        </authorList>
    </citation>
    <scope>NUCLEOTIDE SEQUENCE [LARGE SCALE GENOMIC DNA]</scope>
    <source>
        <strain>SCRI 1043 / ATCC BAA-672</strain>
    </source>
</reference>
<protein>
    <recommendedName>
        <fullName evidence="1">Glucans biosynthesis glucosyltransferase H</fullName>
        <ecNumber evidence="1">2.4.1.-</ecNumber>
    </recommendedName>
</protein>
<dbReference type="EC" id="2.4.1.-" evidence="1"/>
<dbReference type="EMBL" id="BX950851">
    <property type="protein sequence ID" value="CAG74683.1"/>
    <property type="molecule type" value="Genomic_DNA"/>
</dbReference>
<dbReference type="RefSeq" id="WP_011093354.1">
    <property type="nucleotide sequence ID" value="NC_004547.2"/>
</dbReference>
<dbReference type="SMR" id="Q6D6A7"/>
<dbReference type="STRING" id="218491.ECA1778"/>
<dbReference type="CAZy" id="GT2">
    <property type="family name" value="Glycosyltransferase Family 2"/>
</dbReference>
<dbReference type="KEGG" id="eca:ECA1778"/>
<dbReference type="PATRIC" id="fig|218491.5.peg.1805"/>
<dbReference type="eggNOG" id="COG2943">
    <property type="taxonomic scope" value="Bacteria"/>
</dbReference>
<dbReference type="HOGENOM" id="CLU_015730_0_0_6"/>
<dbReference type="OrthoDB" id="9775281at2"/>
<dbReference type="UniPathway" id="UPA00637"/>
<dbReference type="Proteomes" id="UP000007966">
    <property type="component" value="Chromosome"/>
</dbReference>
<dbReference type="GO" id="GO:0005886">
    <property type="term" value="C:plasma membrane"/>
    <property type="evidence" value="ECO:0007669"/>
    <property type="project" value="UniProtKB-SubCell"/>
</dbReference>
<dbReference type="GO" id="GO:0016758">
    <property type="term" value="F:hexosyltransferase activity"/>
    <property type="evidence" value="ECO:0007669"/>
    <property type="project" value="UniProtKB-UniRule"/>
</dbReference>
<dbReference type="GO" id="GO:0009250">
    <property type="term" value="P:glucan biosynthetic process"/>
    <property type="evidence" value="ECO:0007669"/>
    <property type="project" value="UniProtKB-UniRule"/>
</dbReference>
<dbReference type="CDD" id="cd04191">
    <property type="entry name" value="Glucan_BSP_MdoH"/>
    <property type="match status" value="1"/>
</dbReference>
<dbReference type="FunFam" id="3.90.550.10:FF:000047">
    <property type="entry name" value="Glucans biosynthesis glucosyltransferase H"/>
    <property type="match status" value="1"/>
</dbReference>
<dbReference type="Gene3D" id="3.90.550.10">
    <property type="entry name" value="Spore Coat Polysaccharide Biosynthesis Protein SpsA, Chain A"/>
    <property type="match status" value="1"/>
</dbReference>
<dbReference type="HAMAP" id="MF_01072">
    <property type="entry name" value="MdoH_OpgH"/>
    <property type="match status" value="1"/>
</dbReference>
<dbReference type="InterPro" id="IPR023725">
    <property type="entry name" value="Glucans_biosynth_gluTrFase_H"/>
</dbReference>
<dbReference type="InterPro" id="IPR001173">
    <property type="entry name" value="Glyco_trans_2-like"/>
</dbReference>
<dbReference type="InterPro" id="IPR050321">
    <property type="entry name" value="Glycosyltr_2/OpgH_subfam"/>
</dbReference>
<dbReference type="InterPro" id="IPR029044">
    <property type="entry name" value="Nucleotide-diphossugar_trans"/>
</dbReference>
<dbReference type="NCBIfam" id="NF003955">
    <property type="entry name" value="PRK05454.1-1"/>
    <property type="match status" value="1"/>
</dbReference>
<dbReference type="NCBIfam" id="NF003958">
    <property type="entry name" value="PRK05454.2-1"/>
    <property type="match status" value="1"/>
</dbReference>
<dbReference type="NCBIfam" id="NF003962">
    <property type="entry name" value="PRK05454.2-5"/>
    <property type="match status" value="1"/>
</dbReference>
<dbReference type="PANTHER" id="PTHR43867">
    <property type="entry name" value="CELLULOSE SYNTHASE CATALYTIC SUBUNIT A [UDP-FORMING]"/>
    <property type="match status" value="1"/>
</dbReference>
<dbReference type="PANTHER" id="PTHR43867:SF5">
    <property type="entry name" value="GLUCANS BIOSYNTHESIS GLUCOSYLTRANSFERASE H"/>
    <property type="match status" value="1"/>
</dbReference>
<dbReference type="Pfam" id="PF00535">
    <property type="entry name" value="Glycos_transf_2"/>
    <property type="match status" value="1"/>
</dbReference>
<dbReference type="SUPFAM" id="SSF53448">
    <property type="entry name" value="Nucleotide-diphospho-sugar transferases"/>
    <property type="match status" value="1"/>
</dbReference>
<keyword id="KW-0997">Cell inner membrane</keyword>
<keyword id="KW-1003">Cell membrane</keyword>
<keyword id="KW-0328">Glycosyltransferase</keyword>
<keyword id="KW-0472">Membrane</keyword>
<keyword id="KW-1185">Reference proteome</keyword>
<keyword id="KW-0808">Transferase</keyword>
<keyword id="KW-0812">Transmembrane</keyword>
<keyword id="KW-1133">Transmembrane helix</keyword>
<organism>
    <name type="scientific">Pectobacterium atrosepticum (strain SCRI 1043 / ATCC BAA-672)</name>
    <name type="common">Erwinia carotovora subsp. atroseptica</name>
    <dbReference type="NCBI Taxonomy" id="218491"/>
    <lineage>
        <taxon>Bacteria</taxon>
        <taxon>Pseudomonadati</taxon>
        <taxon>Pseudomonadota</taxon>
        <taxon>Gammaproteobacteria</taxon>
        <taxon>Enterobacterales</taxon>
        <taxon>Pectobacteriaceae</taxon>
        <taxon>Pectobacterium</taxon>
    </lineage>
</organism>
<evidence type="ECO:0000255" key="1">
    <source>
        <dbReference type="HAMAP-Rule" id="MF_01072"/>
    </source>
</evidence>
<feature type="chain" id="PRO_1000064604" description="Glucans biosynthesis glucosyltransferase H">
    <location>
        <begin position="1"/>
        <end position="854"/>
    </location>
</feature>
<feature type="transmembrane region" description="Helical" evidence="1">
    <location>
        <begin position="155"/>
        <end position="175"/>
    </location>
</feature>
<feature type="transmembrane region" description="Helical" evidence="1">
    <location>
        <begin position="209"/>
        <end position="229"/>
    </location>
</feature>
<feature type="transmembrane region" description="Helical" evidence="1">
    <location>
        <begin position="528"/>
        <end position="548"/>
    </location>
</feature>
<feature type="transmembrane region" description="Helical" evidence="1">
    <location>
        <begin position="583"/>
        <end position="603"/>
    </location>
</feature>
<feature type="transmembrane region" description="Helical" evidence="1">
    <location>
        <begin position="619"/>
        <end position="639"/>
    </location>
</feature>
<feature type="transmembrane region" description="Helical" evidence="1">
    <location>
        <begin position="671"/>
        <end position="691"/>
    </location>
</feature>
<feature type="transmembrane region" description="Helical" evidence="1">
    <location>
        <begin position="695"/>
        <end position="715"/>
    </location>
</feature>
<proteinExistence type="inferred from homology"/>